<gene>
    <name type="primary">POMK</name>
    <name type="synonym">SGK196</name>
    <name type="ORF">QtsA-17014</name>
</gene>
<name>SG196_MACFA</name>
<protein>
    <recommendedName>
        <fullName>Protein O-mannose kinase</fullName>
        <shortName>POMK</shortName>
        <ecNumber>2.7.1.183</ecNumber>
    </recommendedName>
    <alternativeName>
        <fullName>Protein kinase-like protein SgK196</fullName>
    </alternativeName>
    <alternativeName>
        <fullName>Sugen kinase 196</fullName>
    </alternativeName>
</protein>
<feature type="chain" id="PRO_0000262997" description="Protein O-mannose kinase">
    <location>
        <begin position="1"/>
        <end position="350"/>
    </location>
</feature>
<feature type="topological domain" description="Cytoplasmic" evidence="3">
    <location>
        <begin position="1"/>
        <end position="20"/>
    </location>
</feature>
<feature type="transmembrane region" description="Helical; Signal-anchor for type II membrane protein" evidence="3">
    <location>
        <begin position="21"/>
        <end position="43"/>
    </location>
</feature>
<feature type="topological domain" description="Lumenal" evidence="3">
    <location>
        <begin position="44"/>
        <end position="350"/>
    </location>
</feature>
<feature type="domain" description="Protein kinase" evidence="4">
    <location>
        <begin position="81"/>
        <end position="350"/>
    </location>
</feature>
<feature type="modified residue" description="N-acetylmethionine" evidence="2">
    <location>
        <position position="1"/>
    </location>
</feature>
<feature type="glycosylation site" description="N-linked (GlcNAc...) asparagine" evidence="3">
    <location>
        <position position="165"/>
    </location>
</feature>
<feature type="glycosylation site" description="N-linked (GlcNAc...) asparagine" evidence="3">
    <location>
        <position position="220"/>
    </location>
</feature>
<feature type="glycosylation site" description="N-linked (GlcNAc...) asparagine" evidence="3">
    <location>
        <position position="235"/>
    </location>
</feature>
<organism>
    <name type="scientific">Macaca fascicularis</name>
    <name type="common">Crab-eating macaque</name>
    <name type="synonym">Cynomolgus monkey</name>
    <dbReference type="NCBI Taxonomy" id="9541"/>
    <lineage>
        <taxon>Eukaryota</taxon>
        <taxon>Metazoa</taxon>
        <taxon>Chordata</taxon>
        <taxon>Craniata</taxon>
        <taxon>Vertebrata</taxon>
        <taxon>Euteleostomi</taxon>
        <taxon>Mammalia</taxon>
        <taxon>Eutheria</taxon>
        <taxon>Euarchontoglires</taxon>
        <taxon>Primates</taxon>
        <taxon>Haplorrhini</taxon>
        <taxon>Catarrhini</taxon>
        <taxon>Cercopithecidae</taxon>
        <taxon>Cercopithecinae</taxon>
        <taxon>Macaca</taxon>
    </lineage>
</organism>
<sequence>MEKQPQNKRRGLAPREVPPAVGLLLIMALMNTLLYLCLDHFFIAPRQSIVDPRHCPYGHFRIGQMKNCSPWLSCEELRTEVRQLKRVGEGAVKRVFLSEWKEHKVALSRLTSLEMKDDFLHGLQMLKSLQGAHVVTLLGYCEDDNTILTEYHPLGSLSNLEETLNLSKYQNVNTWQHRLQLAMDYVSIINYLHHSPMGTRVMCDSNDLPKTLSQYLLTSNFSILANDLDALPLVNHSSGTLVKCGHRELHGDFVAPEQLWPYGEDMPFRDNLMPSYDEKIDIWKIPDISSFLLGHIEGSDMVRFHLFDIHKACKSQTPSERPTAQDVLETYQKVLDTLRDAVMSQAREML</sequence>
<dbReference type="EC" id="2.7.1.183"/>
<dbReference type="EMBL" id="AB070191">
    <property type="protein sequence ID" value="BAB63136.1"/>
    <property type="status" value="ALT_INIT"/>
    <property type="molecule type" value="mRNA"/>
</dbReference>
<dbReference type="EMBL" id="CM001283">
    <property type="protein sequence ID" value="EHH64147.1"/>
    <property type="molecule type" value="Genomic_DNA"/>
</dbReference>
<dbReference type="RefSeq" id="NP_001270920.1">
    <property type="nucleotide sequence ID" value="NM_001283991.1"/>
</dbReference>
<dbReference type="SMR" id="Q95JJ0"/>
<dbReference type="STRING" id="9541.ENSMFAP00000033610"/>
<dbReference type="GlyCosmos" id="Q95JJ0">
    <property type="glycosylation" value="3 sites, No reported glycans"/>
</dbReference>
<dbReference type="eggNOG" id="ENOG502QQQV">
    <property type="taxonomic scope" value="Eukaryota"/>
</dbReference>
<dbReference type="Proteomes" id="UP000009130">
    <property type="component" value="Chromosome 8"/>
</dbReference>
<dbReference type="Proteomes" id="UP000233100">
    <property type="component" value="Unplaced"/>
</dbReference>
<dbReference type="GO" id="GO:0005789">
    <property type="term" value="C:endoplasmic reticulum membrane"/>
    <property type="evidence" value="ECO:0007669"/>
    <property type="project" value="UniProtKB-SubCell"/>
</dbReference>
<dbReference type="GO" id="GO:0005524">
    <property type="term" value="F:ATP binding"/>
    <property type="evidence" value="ECO:0007669"/>
    <property type="project" value="UniProtKB-KW"/>
</dbReference>
<dbReference type="GO" id="GO:0019200">
    <property type="term" value="F:carbohydrate kinase activity"/>
    <property type="evidence" value="ECO:0007669"/>
    <property type="project" value="InterPro"/>
</dbReference>
<dbReference type="GO" id="GO:0016773">
    <property type="term" value="F:phosphotransferase activity, alcohol group as acceptor"/>
    <property type="evidence" value="ECO:0000250"/>
    <property type="project" value="UniProtKB"/>
</dbReference>
<dbReference type="GO" id="GO:0004672">
    <property type="term" value="F:protein kinase activity"/>
    <property type="evidence" value="ECO:0007669"/>
    <property type="project" value="InterPro"/>
</dbReference>
<dbReference type="GO" id="GO:0046835">
    <property type="term" value="P:carbohydrate phosphorylation"/>
    <property type="evidence" value="ECO:0000250"/>
    <property type="project" value="UniProtKB"/>
</dbReference>
<dbReference type="GO" id="GO:0006493">
    <property type="term" value="P:protein O-linked glycosylation"/>
    <property type="evidence" value="ECO:0000250"/>
    <property type="project" value="UniProtKB"/>
</dbReference>
<dbReference type="FunFam" id="1.10.510.10:FF:000464">
    <property type="entry name" value="Protein O-mannose kinase"/>
    <property type="match status" value="1"/>
</dbReference>
<dbReference type="Gene3D" id="1.10.510.10">
    <property type="entry name" value="Transferase(Phosphotransferase) domain 1"/>
    <property type="match status" value="1"/>
</dbReference>
<dbReference type="InterPro" id="IPR011009">
    <property type="entry name" value="Kinase-like_dom_sf"/>
</dbReference>
<dbReference type="InterPro" id="IPR039318">
    <property type="entry name" value="POMK"/>
</dbReference>
<dbReference type="InterPro" id="IPR000719">
    <property type="entry name" value="Prot_kinase_dom"/>
</dbReference>
<dbReference type="InterPro" id="IPR001245">
    <property type="entry name" value="Ser-Thr/Tyr_kinase_cat_dom"/>
</dbReference>
<dbReference type="PANTHER" id="PTHR22618">
    <property type="entry name" value="PROTEIN O-MANNOSE KINASE"/>
    <property type="match status" value="1"/>
</dbReference>
<dbReference type="PANTHER" id="PTHR22618:SF2">
    <property type="entry name" value="PROTEIN O-MANNOSE KINASE"/>
    <property type="match status" value="1"/>
</dbReference>
<dbReference type="Pfam" id="PF07714">
    <property type="entry name" value="PK_Tyr_Ser-Thr"/>
    <property type="match status" value="1"/>
</dbReference>
<dbReference type="SUPFAM" id="SSF56112">
    <property type="entry name" value="Protein kinase-like (PK-like)"/>
    <property type="match status" value="1"/>
</dbReference>
<dbReference type="PROSITE" id="PS50011">
    <property type="entry name" value="PROTEIN_KINASE_DOM"/>
    <property type="match status" value="1"/>
</dbReference>
<proteinExistence type="evidence at transcript level"/>
<keyword id="KW-0007">Acetylation</keyword>
<keyword id="KW-0067">ATP-binding</keyword>
<keyword id="KW-0256">Endoplasmic reticulum</keyword>
<keyword id="KW-0325">Glycoprotein</keyword>
<keyword id="KW-0418">Kinase</keyword>
<keyword id="KW-0472">Membrane</keyword>
<keyword id="KW-0547">Nucleotide-binding</keyword>
<keyword id="KW-1185">Reference proteome</keyword>
<keyword id="KW-0735">Signal-anchor</keyword>
<keyword id="KW-0808">Transferase</keyword>
<keyword id="KW-0812">Transmembrane</keyword>
<keyword id="KW-1133">Transmembrane helix</keyword>
<accession>Q95JJ0</accession>
<accession>G7PBS6</accession>
<evidence type="ECO:0000250" key="1"/>
<evidence type="ECO:0000250" key="2">
    <source>
        <dbReference type="UniProtKB" id="Q9H5K3"/>
    </source>
</evidence>
<evidence type="ECO:0000255" key="3"/>
<evidence type="ECO:0000255" key="4">
    <source>
        <dbReference type="PROSITE-ProRule" id="PRU00159"/>
    </source>
</evidence>
<evidence type="ECO:0000305" key="5"/>
<reference key="1">
    <citation type="journal article" date="2002" name="BMC Genomics">
        <title>Cynomolgus monkey testicular cDNAs for discovery of novel human genes in the human genome sequence.</title>
        <authorList>
            <person name="Osada N."/>
            <person name="Hida M."/>
            <person name="Kusuda J."/>
            <person name="Tanuma R."/>
            <person name="Hirata M."/>
            <person name="Suto Y."/>
            <person name="Hirai M."/>
            <person name="Terao K."/>
            <person name="Sugano S."/>
            <person name="Hashimoto K."/>
        </authorList>
    </citation>
    <scope>NUCLEOTIDE SEQUENCE [LARGE SCALE MRNA]</scope>
    <source>
        <tissue>Testis</tissue>
    </source>
</reference>
<reference key="2">
    <citation type="journal article" date="2011" name="Nat. Biotechnol.">
        <title>Genome sequencing and comparison of two nonhuman primate animal models, the cynomolgus and Chinese rhesus macaques.</title>
        <authorList>
            <person name="Yan G."/>
            <person name="Zhang G."/>
            <person name="Fang X."/>
            <person name="Zhang Y."/>
            <person name="Li C."/>
            <person name="Ling F."/>
            <person name="Cooper D.N."/>
            <person name="Li Q."/>
            <person name="Li Y."/>
            <person name="van Gool A.J."/>
            <person name="Du H."/>
            <person name="Chen J."/>
            <person name="Chen R."/>
            <person name="Zhang P."/>
            <person name="Huang Z."/>
            <person name="Thompson J.R."/>
            <person name="Meng Y."/>
            <person name="Bai Y."/>
            <person name="Wang J."/>
            <person name="Zhuo M."/>
            <person name="Wang T."/>
            <person name="Huang Y."/>
            <person name="Wei L."/>
            <person name="Li J."/>
            <person name="Wang Z."/>
            <person name="Hu H."/>
            <person name="Yang P."/>
            <person name="Le L."/>
            <person name="Stenson P.D."/>
            <person name="Li B."/>
            <person name="Liu X."/>
            <person name="Ball E.V."/>
            <person name="An N."/>
            <person name="Huang Q."/>
            <person name="Zhang Y."/>
            <person name="Fan W."/>
            <person name="Zhang X."/>
            <person name="Li Y."/>
            <person name="Wang W."/>
            <person name="Katze M.G."/>
            <person name="Su B."/>
            <person name="Nielsen R."/>
            <person name="Yang H."/>
            <person name="Wang J."/>
            <person name="Wang X."/>
            <person name="Wang J."/>
        </authorList>
    </citation>
    <scope>NUCLEOTIDE SEQUENCE [LARGE SCALE GENOMIC DNA]</scope>
</reference>
<comment type="function">
    <text evidence="1">Protein O-mannose kinase that specifically mediates phosphorylation at the 6-position of an O-mannose of the trisaccharide (N-acetylgalactosamine (GalNAc)-beta-1,3-N-acetylglucosamine (GlcNAc)-beta-1,4-mannose) to generate phosphorylated O-mannosyl trisaccharide (N-acetylgalactosamine-beta-1,3-N-acetylglucosamine-beta-1,4-(phosphate-6-)mannose). Phosphorylated O-mannosyl trisaccharide is a carbohydrate structure present in alpha-dystroglycan (DAG1), which is required for binding laminin G-like domain-containing extracellular proteins with high affinity. Only shows kinase activity when the GalNAc-beta-3-GlcNAc-beta-terminus is linked to the 4-position of O-mannose, suggesting that this disaccharide serves as the substrate recognition motif (By similarity).</text>
</comment>
<comment type="catalytic activity">
    <reaction>
        <text>3-O-[beta-D-GalNAc-(1-&gt;3)-beta-D-GlcNAc-(1-&gt;4)-alpha-D-Man]-L-Thr-[protein] + ATP = 3-O-[beta-D-GalNAc-(1-&gt;3)-beta-D-GlcNAc-(1-&gt;4)-(O-6-P-alpha-D-Man)]-Thr-[protein] + ADP + H(+)</text>
        <dbReference type="Rhea" id="RHEA:52616"/>
        <dbReference type="Rhea" id="RHEA-COMP:13308"/>
        <dbReference type="Rhea" id="RHEA-COMP:13309"/>
        <dbReference type="ChEBI" id="CHEBI:15378"/>
        <dbReference type="ChEBI" id="CHEBI:30616"/>
        <dbReference type="ChEBI" id="CHEBI:136709"/>
        <dbReference type="ChEBI" id="CHEBI:136710"/>
        <dbReference type="ChEBI" id="CHEBI:456216"/>
        <dbReference type="EC" id="2.7.1.183"/>
    </reaction>
</comment>
<comment type="subcellular location">
    <subcellularLocation>
        <location evidence="1">Endoplasmic reticulum membrane</location>
        <topology evidence="1">Single-pass type II membrane protein</topology>
    </subcellularLocation>
</comment>
<comment type="similarity">
    <text evidence="4">Belongs to the protein kinase superfamily. Ser/Thr protein kinase family. STKL subfamily.</text>
</comment>
<comment type="caution">
    <text evidence="5">Although related to the Ser/Thr protein kinase family, has no protein kinase activity and acts as a mannose kinase instead.</text>
</comment>
<comment type="sequence caution" evidence="5">
    <conflict type="erroneous initiation">
        <sequence resource="EMBL-CDS" id="BAB63136"/>
    </conflict>
    <text>Extended N-terminus.</text>
</comment>